<comment type="similarity">
    <text evidence="2">Belongs to the PRR23 family.</text>
</comment>
<name>P23D2_HUMAN</name>
<keyword id="KW-1185">Reference proteome</keyword>
<feature type="chain" id="PRO_0000425122" description="Proline-rich protein 23D2">
    <location>
        <begin position="1"/>
        <end position="279"/>
    </location>
</feature>
<feature type="region of interest" description="Disordered" evidence="1">
    <location>
        <begin position="1"/>
        <end position="60"/>
    </location>
</feature>
<feature type="region of interest" description="Disordered" evidence="1">
    <location>
        <begin position="247"/>
        <end position="270"/>
    </location>
</feature>
<feature type="compositionally biased region" description="Polar residues" evidence="1">
    <location>
        <begin position="15"/>
        <end position="33"/>
    </location>
</feature>
<dbReference type="EMBL" id="AC084121">
    <property type="status" value="NOT_ANNOTATED_CDS"/>
    <property type="molecule type" value="Genomic_DNA"/>
</dbReference>
<dbReference type="CCDS" id="CCDS64821.1"/>
<dbReference type="RefSeq" id="NP_001269407.1">
    <property type="nucleotide sequence ID" value="NM_001282478.1"/>
</dbReference>
<dbReference type="RefSeq" id="NP_001269408.1">
    <property type="nucleotide sequence ID" value="NM_001282479.1"/>
</dbReference>
<dbReference type="RefSeq" id="XP_011533018.1">
    <property type="nucleotide sequence ID" value="XM_011534716.2"/>
</dbReference>
<dbReference type="RefSeq" id="XP_011542113.1">
    <property type="nucleotide sequence ID" value="XM_011543811.3"/>
</dbReference>
<dbReference type="RefSeq" id="XP_054188207.1">
    <property type="nucleotide sequence ID" value="XM_054332232.1"/>
</dbReference>
<dbReference type="BioGRID" id="935384">
    <property type="interactions" value="1"/>
</dbReference>
<dbReference type="BioGRID" id="936210">
    <property type="interactions" value="1"/>
</dbReference>
<dbReference type="FunCoup" id="P0DMB1">
    <property type="interactions" value="1"/>
</dbReference>
<dbReference type="GlyGen" id="P0DMB1">
    <property type="glycosylation" value="1 site"/>
</dbReference>
<dbReference type="BioMuta" id="PRR23D2"/>
<dbReference type="DNASU" id="100131608"/>
<dbReference type="Ensembl" id="ENST00000528972.1">
    <property type="protein sequence ID" value="ENSP00000436580.1"/>
    <property type="gene ID" value="ENSG00000255378.1"/>
</dbReference>
<dbReference type="GeneID" id="100131608"/>
<dbReference type="GeneID" id="100133251"/>
<dbReference type="KEGG" id="hsa:100131608"/>
<dbReference type="KEGG" id="hsa:100133251"/>
<dbReference type="MANE-Select" id="ENST00000528972.1">
    <property type="protein sequence ID" value="ENSP00000436580.1"/>
    <property type="RefSeq nucleotide sequence ID" value="NM_001282478.1"/>
    <property type="RefSeq protein sequence ID" value="NP_001269407.1"/>
</dbReference>
<dbReference type="UCSC" id="uc033bay.2">
    <property type="organism name" value="human"/>
</dbReference>
<dbReference type="AGR" id="HGNC:49396"/>
<dbReference type="AGR" id="HGNC:49420"/>
<dbReference type="CTD" id="100131608"/>
<dbReference type="CTD" id="100133251"/>
<dbReference type="GeneCards" id="PRR23D2"/>
<dbReference type="HGNC" id="HGNC:49396">
    <property type="gene designation" value="PRR23D2"/>
</dbReference>
<dbReference type="HPA" id="ENSG00000255378">
    <property type="expression patterns" value="Tissue enriched (testis)"/>
</dbReference>
<dbReference type="neXtProt" id="NX_P0DMB1"/>
<dbReference type="VEuPathDB" id="HostDB:ENSG00000255378"/>
<dbReference type="GeneTree" id="ENSGT00390000007772"/>
<dbReference type="HOGENOM" id="CLU_1207244_0_0_1"/>
<dbReference type="InParanoid" id="P0DMB1"/>
<dbReference type="OrthoDB" id="9809683at2759"/>
<dbReference type="PAN-GO" id="P0DMB1">
    <property type="GO annotations" value="0 GO annotations based on evolutionary models"/>
</dbReference>
<dbReference type="PhylomeDB" id="P0DMB1"/>
<dbReference type="PathwayCommons" id="P0DMB1"/>
<dbReference type="SignaLink" id="P0DMB1"/>
<dbReference type="BioGRID-ORCS" id="100131608">
    <property type="hits" value="21 hits in 509 CRISPR screens"/>
</dbReference>
<dbReference type="BioGRID-ORCS" id="100133251">
    <property type="hits" value="7 hits in 867 CRISPR screens"/>
</dbReference>
<dbReference type="Pharos" id="P0DMB1">
    <property type="development level" value="Tdark"/>
</dbReference>
<dbReference type="PRO" id="PR:P0DMB1"/>
<dbReference type="Proteomes" id="UP000005640">
    <property type="component" value="Chromosome 8"/>
</dbReference>
<dbReference type="RNAct" id="P0DMB1">
    <property type="molecule type" value="protein"/>
</dbReference>
<dbReference type="Bgee" id="ENSG00000255378">
    <property type="expression patterns" value="Expressed in male germ line stem cell (sensu Vertebrata) in testis and 14 other cell types or tissues"/>
</dbReference>
<dbReference type="InterPro" id="IPR018903">
    <property type="entry name" value="PRR23"/>
</dbReference>
<dbReference type="PANTHER" id="PTHR31813">
    <property type="entry name" value="PROLINE-RICH PROTEIN 23B"/>
    <property type="match status" value="1"/>
</dbReference>
<dbReference type="PANTHER" id="PTHR31813:SF3">
    <property type="entry name" value="PROLINE-RICH PROTEIN 23D1-RELATED"/>
    <property type="match status" value="1"/>
</dbReference>
<dbReference type="Pfam" id="PF10630">
    <property type="entry name" value="DUF2476"/>
    <property type="match status" value="1"/>
</dbReference>
<reference key="1">
    <citation type="journal article" date="2006" name="Nature">
        <title>DNA sequence and analysis of human chromosome 8.</title>
        <authorList>
            <person name="Nusbaum C."/>
            <person name="Mikkelsen T.S."/>
            <person name="Zody M.C."/>
            <person name="Asakawa S."/>
            <person name="Taudien S."/>
            <person name="Garber M."/>
            <person name="Kodira C.D."/>
            <person name="Schueler M.G."/>
            <person name="Shimizu A."/>
            <person name="Whittaker C.A."/>
            <person name="Chang J.L."/>
            <person name="Cuomo C.A."/>
            <person name="Dewar K."/>
            <person name="FitzGerald M.G."/>
            <person name="Yang X."/>
            <person name="Allen N.R."/>
            <person name="Anderson S."/>
            <person name="Asakawa T."/>
            <person name="Blechschmidt K."/>
            <person name="Bloom T."/>
            <person name="Borowsky M.L."/>
            <person name="Butler J."/>
            <person name="Cook A."/>
            <person name="Corum B."/>
            <person name="DeArellano K."/>
            <person name="DeCaprio D."/>
            <person name="Dooley K.T."/>
            <person name="Dorris L. III"/>
            <person name="Engels R."/>
            <person name="Gloeckner G."/>
            <person name="Hafez N."/>
            <person name="Hagopian D.S."/>
            <person name="Hall J.L."/>
            <person name="Ishikawa S.K."/>
            <person name="Jaffe D.B."/>
            <person name="Kamat A."/>
            <person name="Kudoh J."/>
            <person name="Lehmann R."/>
            <person name="Lokitsang T."/>
            <person name="Macdonald P."/>
            <person name="Major J.E."/>
            <person name="Matthews C.D."/>
            <person name="Mauceli E."/>
            <person name="Menzel U."/>
            <person name="Mihalev A.H."/>
            <person name="Minoshima S."/>
            <person name="Murayama Y."/>
            <person name="Naylor J.W."/>
            <person name="Nicol R."/>
            <person name="Nguyen C."/>
            <person name="O'Leary S.B."/>
            <person name="O'Neill K."/>
            <person name="Parker S.C.J."/>
            <person name="Polley A."/>
            <person name="Raymond C.K."/>
            <person name="Reichwald K."/>
            <person name="Rodriguez J."/>
            <person name="Sasaki T."/>
            <person name="Schilhabel M."/>
            <person name="Siddiqui R."/>
            <person name="Smith C.L."/>
            <person name="Sneddon T.P."/>
            <person name="Talamas J.A."/>
            <person name="Tenzin P."/>
            <person name="Topham K."/>
            <person name="Venkataraman V."/>
            <person name="Wen G."/>
            <person name="Yamazaki S."/>
            <person name="Young S.K."/>
            <person name="Zeng Q."/>
            <person name="Zimmer A.R."/>
            <person name="Rosenthal A."/>
            <person name="Birren B.W."/>
            <person name="Platzer M."/>
            <person name="Shimizu N."/>
            <person name="Lander E.S."/>
        </authorList>
    </citation>
    <scope>NUCLEOTIDE SEQUENCE [LARGE SCALE GENOMIC DNA]</scope>
</reference>
<gene>
    <name type="primary">PRR23D2</name>
</gene>
<sequence length="279" mass="31050">MYGYRRLRSPRDSQTEPQNDNEGETSLATTQMNPPKRRQVEQGPSTGAKKPSISGAPHLNSYQSLELPQNQQDSGTEELMIVLEQGTEVRLSLEEVILILAPETVLQLTLENTVLVIVPEHVLRSEDGLQSPVQIQYIIPSVDDFSLEFHAQDGDISDMRRENVPFSPAEEGKAAPLYQQPLMIPQANHMAGISPSFLVTPLCIPRCRAAFPQCYPLPPTPSPVGRPRPADSSFSLHGMELLCTSSLRPMPPSPSPGPQVYHRVHHRPPSRARRCLFRK</sequence>
<organism>
    <name type="scientific">Homo sapiens</name>
    <name type="common">Human</name>
    <dbReference type="NCBI Taxonomy" id="9606"/>
    <lineage>
        <taxon>Eukaryota</taxon>
        <taxon>Metazoa</taxon>
        <taxon>Chordata</taxon>
        <taxon>Craniata</taxon>
        <taxon>Vertebrata</taxon>
        <taxon>Euteleostomi</taxon>
        <taxon>Mammalia</taxon>
        <taxon>Eutheria</taxon>
        <taxon>Euarchontoglires</taxon>
        <taxon>Primates</taxon>
        <taxon>Haplorrhini</taxon>
        <taxon>Catarrhini</taxon>
        <taxon>Hominidae</taxon>
        <taxon>Homo</taxon>
    </lineage>
</organism>
<accession>P0DMB1</accession>
<proteinExistence type="inferred from homology"/>
<evidence type="ECO:0000256" key="1">
    <source>
        <dbReference type="SAM" id="MobiDB-lite"/>
    </source>
</evidence>
<evidence type="ECO:0000305" key="2"/>
<protein>
    <recommendedName>
        <fullName>Proline-rich protein 23D2</fullName>
    </recommendedName>
</protein>